<feature type="chain" id="PRO_1000187745" description="Demethylmenaquinone methyltransferase">
    <location>
        <begin position="1"/>
        <end position="229"/>
    </location>
</feature>
<feature type="binding site" evidence="1">
    <location>
        <position position="57"/>
    </location>
    <ligand>
        <name>S-adenosyl-L-methionine</name>
        <dbReference type="ChEBI" id="CHEBI:59789"/>
    </ligand>
</feature>
<feature type="binding site" evidence="1">
    <location>
        <position position="77"/>
    </location>
    <ligand>
        <name>S-adenosyl-L-methionine</name>
        <dbReference type="ChEBI" id="CHEBI:59789"/>
    </ligand>
</feature>
<feature type="binding site" evidence="1">
    <location>
        <begin position="101"/>
        <end position="102"/>
    </location>
    <ligand>
        <name>S-adenosyl-L-methionine</name>
        <dbReference type="ChEBI" id="CHEBI:59789"/>
    </ligand>
</feature>
<protein>
    <recommendedName>
        <fullName evidence="1">Demethylmenaquinone methyltransferase</fullName>
        <ecNumber evidence="1">2.1.1.163</ecNumber>
    </recommendedName>
</protein>
<dbReference type="EC" id="2.1.1.163" evidence="1"/>
<dbReference type="EMBL" id="AM884176">
    <property type="protein sequence ID" value="CAP04126.1"/>
    <property type="molecule type" value="Genomic_DNA"/>
</dbReference>
<dbReference type="RefSeq" id="YP_001654759.1">
    <property type="nucleotide sequence ID" value="NC_010287.1"/>
</dbReference>
<dbReference type="SMR" id="B0B800"/>
<dbReference type="KEGG" id="ctb:CTL0687"/>
<dbReference type="PATRIC" id="fig|471472.4.peg.739"/>
<dbReference type="HOGENOM" id="CLU_037990_0_0_0"/>
<dbReference type="UniPathway" id="UPA00079">
    <property type="reaction ID" value="UER00169"/>
</dbReference>
<dbReference type="Proteomes" id="UP001154402">
    <property type="component" value="Chromosome"/>
</dbReference>
<dbReference type="GO" id="GO:0043770">
    <property type="term" value="F:demethylmenaquinone methyltransferase activity"/>
    <property type="evidence" value="ECO:0007669"/>
    <property type="project" value="UniProtKB-UniRule"/>
</dbReference>
<dbReference type="GO" id="GO:0009234">
    <property type="term" value="P:menaquinone biosynthetic process"/>
    <property type="evidence" value="ECO:0007669"/>
    <property type="project" value="UniProtKB-UniRule"/>
</dbReference>
<dbReference type="GO" id="GO:0032259">
    <property type="term" value="P:methylation"/>
    <property type="evidence" value="ECO:0007669"/>
    <property type="project" value="UniProtKB-KW"/>
</dbReference>
<dbReference type="CDD" id="cd02440">
    <property type="entry name" value="AdoMet_MTases"/>
    <property type="match status" value="1"/>
</dbReference>
<dbReference type="Gene3D" id="3.40.50.150">
    <property type="entry name" value="Vaccinia Virus protein VP39"/>
    <property type="match status" value="1"/>
</dbReference>
<dbReference type="HAMAP" id="MF_01813">
    <property type="entry name" value="MenG_UbiE_methyltr"/>
    <property type="match status" value="1"/>
</dbReference>
<dbReference type="InterPro" id="IPR029063">
    <property type="entry name" value="SAM-dependent_MTases_sf"/>
</dbReference>
<dbReference type="InterPro" id="IPR004033">
    <property type="entry name" value="UbiE/COQ5_MeTrFase"/>
</dbReference>
<dbReference type="InterPro" id="IPR023576">
    <property type="entry name" value="UbiE/COQ5_MeTrFase_CS"/>
</dbReference>
<dbReference type="NCBIfam" id="TIGR01934">
    <property type="entry name" value="MenG_MenH_UbiE"/>
    <property type="match status" value="1"/>
</dbReference>
<dbReference type="NCBIfam" id="NF001244">
    <property type="entry name" value="PRK00216.1-5"/>
    <property type="match status" value="1"/>
</dbReference>
<dbReference type="PANTHER" id="PTHR43591:SF24">
    <property type="entry name" value="2-METHOXY-6-POLYPRENYL-1,4-BENZOQUINOL METHYLASE, MITOCHONDRIAL"/>
    <property type="match status" value="1"/>
</dbReference>
<dbReference type="PANTHER" id="PTHR43591">
    <property type="entry name" value="METHYLTRANSFERASE"/>
    <property type="match status" value="1"/>
</dbReference>
<dbReference type="Pfam" id="PF01209">
    <property type="entry name" value="Ubie_methyltran"/>
    <property type="match status" value="1"/>
</dbReference>
<dbReference type="SUPFAM" id="SSF53335">
    <property type="entry name" value="S-adenosyl-L-methionine-dependent methyltransferases"/>
    <property type="match status" value="1"/>
</dbReference>
<dbReference type="PROSITE" id="PS51608">
    <property type="entry name" value="SAM_MT_UBIE"/>
    <property type="match status" value="1"/>
</dbReference>
<dbReference type="PROSITE" id="PS01183">
    <property type="entry name" value="UBIE_1"/>
    <property type="match status" value="1"/>
</dbReference>
<dbReference type="PROSITE" id="PS01184">
    <property type="entry name" value="UBIE_2"/>
    <property type="match status" value="1"/>
</dbReference>
<organism>
    <name type="scientific">Chlamydia trachomatis serovar L2 (strain ATCC VR-902B / DSM 19102 / 434/Bu)</name>
    <dbReference type="NCBI Taxonomy" id="471472"/>
    <lineage>
        <taxon>Bacteria</taxon>
        <taxon>Pseudomonadati</taxon>
        <taxon>Chlamydiota</taxon>
        <taxon>Chlamydiia</taxon>
        <taxon>Chlamydiales</taxon>
        <taxon>Chlamydiaceae</taxon>
        <taxon>Chlamydia/Chlamydophila group</taxon>
        <taxon>Chlamydia</taxon>
    </lineage>
</organism>
<name>MENG_CHLT2</name>
<evidence type="ECO:0000255" key="1">
    <source>
        <dbReference type="HAMAP-Rule" id="MF_01813"/>
    </source>
</evidence>
<proteinExistence type="inferred from homology"/>
<accession>B0B800</accession>
<gene>
    <name evidence="1" type="primary">menG</name>
    <name type="ordered locus">CTL0687</name>
</gene>
<reference key="1">
    <citation type="journal article" date="2008" name="Genome Res.">
        <title>Chlamydia trachomatis: genome sequence analysis of lymphogranuloma venereum isolates.</title>
        <authorList>
            <person name="Thomson N.R."/>
            <person name="Holden M.T.G."/>
            <person name="Carder C."/>
            <person name="Lennard N."/>
            <person name="Lockey S.J."/>
            <person name="Marsh P."/>
            <person name="Skipp P."/>
            <person name="O'Connor C.D."/>
            <person name="Goodhead I."/>
            <person name="Norbertzcak H."/>
            <person name="Harris B."/>
            <person name="Ormond D."/>
            <person name="Rance R."/>
            <person name="Quail M.A."/>
            <person name="Parkhill J."/>
            <person name="Stephens R.S."/>
            <person name="Clarke I.N."/>
        </authorList>
    </citation>
    <scope>NUCLEOTIDE SEQUENCE [LARGE SCALE GENOMIC DNA]</scope>
    <source>
        <strain>ATCC VR-902B / DSM 19102 / 434/Bu</strain>
    </source>
</reference>
<keyword id="KW-0474">Menaquinone biosynthesis</keyword>
<keyword id="KW-0489">Methyltransferase</keyword>
<keyword id="KW-0949">S-adenosyl-L-methionine</keyword>
<keyword id="KW-0808">Transferase</keyword>
<comment type="function">
    <text evidence="1">Methyltransferase required for the conversion of demethylmenaquinol (DMKH2) to menaquinol (MKH2).</text>
</comment>
<comment type="catalytic activity">
    <reaction evidence="1">
        <text>a 2-demethylmenaquinol + S-adenosyl-L-methionine = a menaquinol + S-adenosyl-L-homocysteine + H(+)</text>
        <dbReference type="Rhea" id="RHEA:42640"/>
        <dbReference type="Rhea" id="RHEA-COMP:9539"/>
        <dbReference type="Rhea" id="RHEA-COMP:9563"/>
        <dbReference type="ChEBI" id="CHEBI:15378"/>
        <dbReference type="ChEBI" id="CHEBI:18151"/>
        <dbReference type="ChEBI" id="CHEBI:55437"/>
        <dbReference type="ChEBI" id="CHEBI:57856"/>
        <dbReference type="ChEBI" id="CHEBI:59789"/>
        <dbReference type="EC" id="2.1.1.163"/>
    </reaction>
</comment>
<comment type="pathway">
    <text evidence="1">Quinol/quinone metabolism; menaquinone biosynthesis; menaquinol from 1,4-dihydroxy-2-naphthoate: step 2/2.</text>
</comment>
<comment type="similarity">
    <text evidence="1">Belongs to the class I-like SAM-binding methyltransferase superfamily. MenG/UbiE family.</text>
</comment>
<sequence length="229" mass="25844">MTDFHDKPNIQIMFDSLAPTYDKINGILSLGLHIAWNNALVSLLGETNHLLDLCAGTGRVALSYVQNYPRASATLVDFSTKMLENVQKRHPSAPFSYITSDVTHLPLPDNTFRLASMAYGLRNLSYPLEALREVYRVLQPGGHLGILELTRPATYNPVYLLHKLYLNLVVPSVGRFYSGNSYAYSYLKESIRDLPRDAALEAIFHAAHLRPIRKRKLLFGTATIWILEK</sequence>